<sequence length="339" mass="37185">MTLHVQSAVSLRPFNTFGVDVQARLFAQARNDDEVREALAYSAEHDVPLLVIGGGSNLLLSGDVQALVLRMASRGIRIVREDCLEAIVEAEAGEPWHPFVQSCLELGLAGLENLSLIPGTVGAAPMQNIGAYGVEIKDVFHGLTALDRETGELREFALQDCAFGYRDSVFKHQPGRWLILRVRFKLSREANLHLEYGPVRQRLDQLGIDKPTPFDVSRAICAIRSEKLPDPAVLGNAGSFFKNPLVAAELYATIKSQHPGVVGYPQADGQVKLAAGWLIEQAGWKGYRDGDAGVHKLQSLVLVNYGHASGLQLLNLARRIQADIVERFGVELEMEPNLY</sequence>
<organism>
    <name type="scientific">Pseudomonas syringae pv. tomato (strain ATCC BAA-871 / DC3000)</name>
    <dbReference type="NCBI Taxonomy" id="223283"/>
    <lineage>
        <taxon>Bacteria</taxon>
        <taxon>Pseudomonadati</taxon>
        <taxon>Pseudomonadota</taxon>
        <taxon>Gammaproteobacteria</taxon>
        <taxon>Pseudomonadales</taxon>
        <taxon>Pseudomonadaceae</taxon>
        <taxon>Pseudomonas</taxon>
    </lineage>
</organism>
<accession>Q87YF8</accession>
<dbReference type="EC" id="1.3.1.98" evidence="1"/>
<dbReference type="EMBL" id="AE016853">
    <property type="protein sequence ID" value="AAO57309.1"/>
    <property type="molecule type" value="Genomic_DNA"/>
</dbReference>
<dbReference type="RefSeq" id="NP_793614.1">
    <property type="nucleotide sequence ID" value="NC_004578.1"/>
</dbReference>
<dbReference type="RefSeq" id="WP_005770641.1">
    <property type="nucleotide sequence ID" value="NC_004578.1"/>
</dbReference>
<dbReference type="SMR" id="Q87YF8"/>
<dbReference type="STRING" id="223283.PSPTO_3842"/>
<dbReference type="GeneID" id="1185513"/>
<dbReference type="KEGG" id="pst:PSPTO_3842"/>
<dbReference type="PATRIC" id="fig|223283.9.peg.3939"/>
<dbReference type="eggNOG" id="COG0812">
    <property type="taxonomic scope" value="Bacteria"/>
</dbReference>
<dbReference type="HOGENOM" id="CLU_035304_0_0_6"/>
<dbReference type="OrthoDB" id="9804753at2"/>
<dbReference type="PhylomeDB" id="Q87YF8"/>
<dbReference type="UniPathway" id="UPA00219"/>
<dbReference type="Proteomes" id="UP000002515">
    <property type="component" value="Chromosome"/>
</dbReference>
<dbReference type="GO" id="GO:0005829">
    <property type="term" value="C:cytosol"/>
    <property type="evidence" value="ECO:0007669"/>
    <property type="project" value="TreeGrafter"/>
</dbReference>
<dbReference type="GO" id="GO:0071949">
    <property type="term" value="F:FAD binding"/>
    <property type="evidence" value="ECO:0007669"/>
    <property type="project" value="InterPro"/>
</dbReference>
<dbReference type="GO" id="GO:0008762">
    <property type="term" value="F:UDP-N-acetylmuramate dehydrogenase activity"/>
    <property type="evidence" value="ECO:0007669"/>
    <property type="project" value="UniProtKB-UniRule"/>
</dbReference>
<dbReference type="GO" id="GO:0051301">
    <property type="term" value="P:cell division"/>
    <property type="evidence" value="ECO:0007669"/>
    <property type="project" value="UniProtKB-KW"/>
</dbReference>
<dbReference type="GO" id="GO:0071555">
    <property type="term" value="P:cell wall organization"/>
    <property type="evidence" value="ECO:0007669"/>
    <property type="project" value="UniProtKB-KW"/>
</dbReference>
<dbReference type="GO" id="GO:0009252">
    <property type="term" value="P:peptidoglycan biosynthetic process"/>
    <property type="evidence" value="ECO:0007669"/>
    <property type="project" value="UniProtKB-UniRule"/>
</dbReference>
<dbReference type="GO" id="GO:0008360">
    <property type="term" value="P:regulation of cell shape"/>
    <property type="evidence" value="ECO:0007669"/>
    <property type="project" value="UniProtKB-KW"/>
</dbReference>
<dbReference type="Gene3D" id="3.30.465.10">
    <property type="match status" value="1"/>
</dbReference>
<dbReference type="Gene3D" id="3.90.78.10">
    <property type="entry name" value="UDP-N-acetylenolpyruvoylglucosamine reductase, C-terminal domain"/>
    <property type="match status" value="1"/>
</dbReference>
<dbReference type="Gene3D" id="3.30.43.10">
    <property type="entry name" value="Uridine Diphospho-n-acetylenolpyruvylglucosamine Reductase, domain 2"/>
    <property type="match status" value="1"/>
</dbReference>
<dbReference type="HAMAP" id="MF_00037">
    <property type="entry name" value="MurB"/>
    <property type="match status" value="1"/>
</dbReference>
<dbReference type="InterPro" id="IPR016166">
    <property type="entry name" value="FAD-bd_PCMH"/>
</dbReference>
<dbReference type="InterPro" id="IPR036318">
    <property type="entry name" value="FAD-bd_PCMH-like_sf"/>
</dbReference>
<dbReference type="InterPro" id="IPR016167">
    <property type="entry name" value="FAD-bd_PCMH_sub1"/>
</dbReference>
<dbReference type="InterPro" id="IPR016169">
    <property type="entry name" value="FAD-bd_PCMH_sub2"/>
</dbReference>
<dbReference type="InterPro" id="IPR003170">
    <property type="entry name" value="MurB"/>
</dbReference>
<dbReference type="InterPro" id="IPR011601">
    <property type="entry name" value="MurB_C"/>
</dbReference>
<dbReference type="InterPro" id="IPR036635">
    <property type="entry name" value="MurB_C_sf"/>
</dbReference>
<dbReference type="InterPro" id="IPR006094">
    <property type="entry name" value="Oxid_FAD_bind_N"/>
</dbReference>
<dbReference type="NCBIfam" id="TIGR00179">
    <property type="entry name" value="murB"/>
    <property type="match status" value="1"/>
</dbReference>
<dbReference type="NCBIfam" id="NF000755">
    <property type="entry name" value="PRK00046.1"/>
    <property type="match status" value="1"/>
</dbReference>
<dbReference type="NCBIfam" id="NF010478">
    <property type="entry name" value="PRK13903.1"/>
    <property type="match status" value="1"/>
</dbReference>
<dbReference type="PANTHER" id="PTHR21071">
    <property type="entry name" value="UDP-N-ACETYLENOLPYRUVOYLGLUCOSAMINE REDUCTASE"/>
    <property type="match status" value="1"/>
</dbReference>
<dbReference type="PANTHER" id="PTHR21071:SF4">
    <property type="entry name" value="UDP-N-ACETYLENOLPYRUVOYLGLUCOSAMINE REDUCTASE"/>
    <property type="match status" value="1"/>
</dbReference>
<dbReference type="Pfam" id="PF01565">
    <property type="entry name" value="FAD_binding_4"/>
    <property type="match status" value="1"/>
</dbReference>
<dbReference type="Pfam" id="PF02873">
    <property type="entry name" value="MurB_C"/>
    <property type="match status" value="1"/>
</dbReference>
<dbReference type="SUPFAM" id="SSF56176">
    <property type="entry name" value="FAD-binding/transporter-associated domain-like"/>
    <property type="match status" value="1"/>
</dbReference>
<dbReference type="SUPFAM" id="SSF56194">
    <property type="entry name" value="Uridine diphospho-N-Acetylenolpyruvylglucosamine reductase, MurB, C-terminal domain"/>
    <property type="match status" value="1"/>
</dbReference>
<dbReference type="PROSITE" id="PS51387">
    <property type="entry name" value="FAD_PCMH"/>
    <property type="match status" value="1"/>
</dbReference>
<name>MURB_PSESM</name>
<gene>
    <name evidence="1" type="primary">murB</name>
    <name type="ordered locus">PSPTO_3842</name>
</gene>
<reference key="1">
    <citation type="journal article" date="2003" name="Proc. Natl. Acad. Sci. U.S.A.">
        <title>The complete genome sequence of the Arabidopsis and tomato pathogen Pseudomonas syringae pv. tomato DC3000.</title>
        <authorList>
            <person name="Buell C.R."/>
            <person name="Joardar V."/>
            <person name="Lindeberg M."/>
            <person name="Selengut J."/>
            <person name="Paulsen I.T."/>
            <person name="Gwinn M.L."/>
            <person name="Dodson R.J."/>
            <person name="DeBoy R.T."/>
            <person name="Durkin A.S."/>
            <person name="Kolonay J.F."/>
            <person name="Madupu R."/>
            <person name="Daugherty S.C."/>
            <person name="Brinkac L.M."/>
            <person name="Beanan M.J."/>
            <person name="Haft D.H."/>
            <person name="Nelson W.C."/>
            <person name="Davidsen T.M."/>
            <person name="Zafar N."/>
            <person name="Zhou L."/>
            <person name="Liu J."/>
            <person name="Yuan Q."/>
            <person name="Khouri H.M."/>
            <person name="Fedorova N.B."/>
            <person name="Tran B."/>
            <person name="Russell D."/>
            <person name="Berry K.J."/>
            <person name="Utterback T.R."/>
            <person name="Van Aken S.E."/>
            <person name="Feldblyum T.V."/>
            <person name="D'Ascenzo M."/>
            <person name="Deng W.-L."/>
            <person name="Ramos A.R."/>
            <person name="Alfano J.R."/>
            <person name="Cartinhour S."/>
            <person name="Chatterjee A.K."/>
            <person name="Delaney T.P."/>
            <person name="Lazarowitz S.G."/>
            <person name="Martin G.B."/>
            <person name="Schneider D.J."/>
            <person name="Tang X."/>
            <person name="Bender C.L."/>
            <person name="White O."/>
            <person name="Fraser C.M."/>
            <person name="Collmer A."/>
        </authorList>
    </citation>
    <scope>NUCLEOTIDE SEQUENCE [LARGE SCALE GENOMIC DNA]</scope>
    <source>
        <strain>ATCC BAA-871 / DC3000</strain>
    </source>
</reference>
<feature type="chain" id="PRO_0000179244" description="UDP-N-acetylenolpyruvoylglucosamine reductase">
    <location>
        <begin position="1"/>
        <end position="339"/>
    </location>
</feature>
<feature type="domain" description="FAD-binding PCMH-type" evidence="1">
    <location>
        <begin position="19"/>
        <end position="189"/>
    </location>
</feature>
<feature type="active site" evidence="1">
    <location>
        <position position="166"/>
    </location>
</feature>
<feature type="active site" description="Proton donor" evidence="1">
    <location>
        <position position="239"/>
    </location>
</feature>
<feature type="active site" evidence="1">
    <location>
        <position position="335"/>
    </location>
</feature>
<comment type="function">
    <text evidence="1">Cell wall formation.</text>
</comment>
<comment type="catalytic activity">
    <reaction evidence="1">
        <text>UDP-N-acetyl-alpha-D-muramate + NADP(+) = UDP-N-acetyl-3-O-(1-carboxyvinyl)-alpha-D-glucosamine + NADPH + H(+)</text>
        <dbReference type="Rhea" id="RHEA:12248"/>
        <dbReference type="ChEBI" id="CHEBI:15378"/>
        <dbReference type="ChEBI" id="CHEBI:57783"/>
        <dbReference type="ChEBI" id="CHEBI:58349"/>
        <dbReference type="ChEBI" id="CHEBI:68483"/>
        <dbReference type="ChEBI" id="CHEBI:70757"/>
        <dbReference type="EC" id="1.3.1.98"/>
    </reaction>
</comment>
<comment type="cofactor">
    <cofactor evidence="1">
        <name>FAD</name>
        <dbReference type="ChEBI" id="CHEBI:57692"/>
    </cofactor>
</comment>
<comment type="pathway">
    <text evidence="1">Cell wall biogenesis; peptidoglycan biosynthesis.</text>
</comment>
<comment type="subcellular location">
    <subcellularLocation>
        <location evidence="1">Cytoplasm</location>
    </subcellularLocation>
</comment>
<comment type="similarity">
    <text evidence="1">Belongs to the MurB family.</text>
</comment>
<evidence type="ECO:0000255" key="1">
    <source>
        <dbReference type="HAMAP-Rule" id="MF_00037"/>
    </source>
</evidence>
<keyword id="KW-0131">Cell cycle</keyword>
<keyword id="KW-0132">Cell division</keyword>
<keyword id="KW-0133">Cell shape</keyword>
<keyword id="KW-0961">Cell wall biogenesis/degradation</keyword>
<keyword id="KW-0963">Cytoplasm</keyword>
<keyword id="KW-0274">FAD</keyword>
<keyword id="KW-0285">Flavoprotein</keyword>
<keyword id="KW-0521">NADP</keyword>
<keyword id="KW-0560">Oxidoreductase</keyword>
<keyword id="KW-0573">Peptidoglycan synthesis</keyword>
<keyword id="KW-1185">Reference proteome</keyword>
<protein>
    <recommendedName>
        <fullName evidence="1">UDP-N-acetylenolpyruvoylglucosamine reductase</fullName>
        <ecNumber evidence="1">1.3.1.98</ecNumber>
    </recommendedName>
    <alternativeName>
        <fullName evidence="1">UDP-N-acetylmuramate dehydrogenase</fullName>
    </alternativeName>
</protein>
<proteinExistence type="inferred from homology"/>